<reference key="1">
    <citation type="journal article" date="1992" name="FEBS Lett.">
        <title>Cloning, sequence analysis and expression in Escherichia coli of the cDNA encoding a precursor of peanut agglutinin.</title>
        <authorList>
            <person name="Rodriguez-Arango E."/>
            <person name="Arango R."/>
            <person name="Adar R."/>
            <person name="Galili G."/>
            <person name="Sharon N."/>
        </authorList>
    </citation>
    <scope>NUCLEOTIDE SEQUENCE [MRNA]</scope>
    <source>
        <tissue>Seed</tissue>
    </source>
</reference>
<reference key="2">
    <citation type="journal article" date="1991" name="Eur. J. Biochem.">
        <title>The amino acid sequence of peanut agglutinin.</title>
        <authorList>
            <person name="Young N.M."/>
            <person name="Johnston R.A.Z."/>
            <person name="Watson D.C."/>
        </authorList>
    </citation>
    <scope>PROTEIN SEQUENCE OF 24-273</scope>
    <source>
        <tissue>Seed</tissue>
    </source>
</reference>
<reference key="3">
    <citation type="journal article" date="1985" name="FEBS Lett.">
        <title>Sequence studies of peanut agglutinin.</title>
        <authorList>
            <person name="Lauwereys M."/>
            <person name="Foriers A."/>
            <person name="Sharon N."/>
            <person name="Strosberg A.D."/>
        </authorList>
    </citation>
    <scope>PRELIMINARY PARTIAL PROTEIN SEQUENCE</scope>
    <source>
        <strain>cv. Shulamit</strain>
    </source>
</reference>
<reference key="4">
    <citation type="journal article" date="1996" name="J. Mol. Biol.">
        <title>Conformation, protein-carbohydrate interactions and a novel subunit association in the refined structure of peanut lectin-lactose complex.</title>
        <authorList>
            <person name="Banerjee R."/>
            <person name="Das K."/>
            <person name="Ravishankar R."/>
            <person name="Suguna K."/>
            <person name="Surolia A."/>
            <person name="Vijayan M."/>
        </authorList>
    </citation>
    <scope>X-RAY CRYSTALLOGRAPHY (2.25 ANGSTROMS)</scope>
</reference>
<reference key="5">
    <citation type="journal article" date="1999" name="Acta Crystallogr. D">
        <title>Structures of the complexes of peanut lectin with methyl-beta-galactose and N-acetyllactosamine and a comparative study of carbohydrate binding in Gal/GalNAc-specific legume lectins.</title>
        <authorList>
            <person name="Ravishankar R."/>
            <person name="Suguna K."/>
            <person name="Surolia A."/>
            <person name="Vijayan M."/>
        </authorList>
    </citation>
    <scope>X-RAY CRYSTALLOGRAPHY (2.7 ANGSTROMS)</scope>
</reference>
<proteinExistence type="evidence at protein level"/>
<evidence type="ECO:0000269" key="1">
    <source>
    </source>
</evidence>
<evidence type="ECO:0000305" key="2"/>
<evidence type="ECO:0007829" key="3">
    <source>
        <dbReference type="PDB" id="1V6N"/>
    </source>
</evidence>
<evidence type="ECO:0007829" key="4">
    <source>
        <dbReference type="PDB" id="6VAW"/>
    </source>
</evidence>
<organism>
    <name type="scientific">Arachis hypogaea</name>
    <name type="common">Peanut</name>
    <dbReference type="NCBI Taxonomy" id="3818"/>
    <lineage>
        <taxon>Eukaryota</taxon>
        <taxon>Viridiplantae</taxon>
        <taxon>Streptophyta</taxon>
        <taxon>Embryophyta</taxon>
        <taxon>Tracheophyta</taxon>
        <taxon>Spermatophyta</taxon>
        <taxon>Magnoliopsida</taxon>
        <taxon>eudicotyledons</taxon>
        <taxon>Gunneridae</taxon>
        <taxon>Pentapetalae</taxon>
        <taxon>rosids</taxon>
        <taxon>fabids</taxon>
        <taxon>Fabales</taxon>
        <taxon>Fabaceae</taxon>
        <taxon>Papilionoideae</taxon>
        <taxon>50 kb inversion clade</taxon>
        <taxon>dalbergioids sensu lato</taxon>
        <taxon>Dalbergieae</taxon>
        <taxon>Pterocarpus clade</taxon>
        <taxon>Arachis</taxon>
    </lineage>
</organism>
<protein>
    <recommendedName>
        <fullName>Galactose-binding lectin</fullName>
    </recommendedName>
    <alternativeName>
        <fullName>Agglutinin</fullName>
    </alternativeName>
    <alternativeName>
        <fullName>PNA</fullName>
    </alternativeName>
</protein>
<dbReference type="EMBL" id="S42352">
    <property type="protein sequence ID" value="AAB22817.1"/>
    <property type="molecule type" value="mRNA"/>
</dbReference>
<dbReference type="PIR" id="A03364">
    <property type="entry name" value="LNNPG"/>
</dbReference>
<dbReference type="PIR" id="S24044">
    <property type="entry name" value="S24044"/>
</dbReference>
<dbReference type="RefSeq" id="NP_001363138.1">
    <property type="nucleotide sequence ID" value="NM_001376209.1"/>
</dbReference>
<dbReference type="PDB" id="1BZW">
    <property type="method" value="X-ray"/>
    <property type="resolution" value="2.70 A"/>
    <property type="chains" value="A/B/C/D=24-255"/>
</dbReference>
<dbReference type="PDB" id="1CIW">
    <property type="method" value="X-ray"/>
    <property type="resolution" value="2.70 A"/>
    <property type="chains" value="A/B/C/D=24-259"/>
</dbReference>
<dbReference type="PDB" id="1CQ9">
    <property type="method" value="X-ray"/>
    <property type="resolution" value="3.50 A"/>
    <property type="chains" value="A/B/C/D=24-259"/>
</dbReference>
<dbReference type="PDB" id="1CR7">
    <property type="method" value="X-ray"/>
    <property type="resolution" value="2.60 A"/>
    <property type="chains" value="A/B/C/D/E/F/G/H=24-259"/>
</dbReference>
<dbReference type="PDB" id="1QF3">
    <property type="method" value="X-ray"/>
    <property type="resolution" value="2.80 A"/>
    <property type="chains" value="A/B/C/D=24-259"/>
</dbReference>
<dbReference type="PDB" id="1RIR">
    <property type="method" value="X-ray"/>
    <property type="resolution" value="2.90 A"/>
    <property type="chains" value="A/B/C/D=24-259"/>
</dbReference>
<dbReference type="PDB" id="1RIT">
    <property type="method" value="X-ray"/>
    <property type="resolution" value="2.85 A"/>
    <property type="chains" value="A/B/C/D=24-259"/>
</dbReference>
<dbReference type="PDB" id="1V6I">
    <property type="method" value="X-ray"/>
    <property type="resolution" value="2.15 A"/>
    <property type="chains" value="A/B/C/D=24-255"/>
</dbReference>
<dbReference type="PDB" id="1V6J">
    <property type="method" value="X-ray"/>
    <property type="resolution" value="2.90 A"/>
    <property type="chains" value="A/B/C/D=24-255"/>
</dbReference>
<dbReference type="PDB" id="1V6K">
    <property type="method" value="X-ray"/>
    <property type="resolution" value="2.40 A"/>
    <property type="chains" value="A/B/C/D=24-255"/>
</dbReference>
<dbReference type="PDB" id="1V6L">
    <property type="method" value="X-ray"/>
    <property type="resolution" value="2.50 A"/>
    <property type="chains" value="A/B/C/D=24-255"/>
</dbReference>
<dbReference type="PDB" id="1V6M">
    <property type="method" value="X-ray"/>
    <property type="resolution" value="2.70 A"/>
    <property type="chains" value="A/B/C/D/E/F/G/H=24-255"/>
</dbReference>
<dbReference type="PDB" id="1V6N">
    <property type="method" value="X-ray"/>
    <property type="resolution" value="3.50 A"/>
    <property type="chains" value="A/B/C/D/E/F/G/H=24-255"/>
</dbReference>
<dbReference type="PDB" id="1V6O">
    <property type="method" value="X-ray"/>
    <property type="resolution" value="3.00 A"/>
    <property type="chains" value="A/B/C/D/E/F/G/H=24-255"/>
</dbReference>
<dbReference type="PDB" id="2DH1">
    <property type="method" value="X-ray"/>
    <property type="resolution" value="7.65 A"/>
    <property type="chains" value="A/B/C/D=24-259"/>
</dbReference>
<dbReference type="PDB" id="2DV9">
    <property type="method" value="X-ray"/>
    <property type="resolution" value="2.48 A"/>
    <property type="chains" value="A/B/C/D=24-259"/>
</dbReference>
<dbReference type="PDB" id="2DVA">
    <property type="method" value="X-ray"/>
    <property type="resolution" value="2.20 A"/>
    <property type="chains" value="A/B/C/D=24-259"/>
</dbReference>
<dbReference type="PDB" id="2DVB">
    <property type="method" value="X-ray"/>
    <property type="resolution" value="2.25 A"/>
    <property type="chains" value="A/B/C/D=24-259"/>
</dbReference>
<dbReference type="PDB" id="2DVD">
    <property type="method" value="X-ray"/>
    <property type="resolution" value="2.25 A"/>
    <property type="chains" value="A/B/C/D=24-259"/>
</dbReference>
<dbReference type="PDB" id="2DVF">
    <property type="method" value="X-ray"/>
    <property type="resolution" value="2.74 A"/>
    <property type="chains" value="A/B/C/D=24-259"/>
</dbReference>
<dbReference type="PDB" id="2DVG">
    <property type="method" value="X-ray"/>
    <property type="resolution" value="2.78 A"/>
    <property type="chains" value="A/B/C/D=24-259"/>
</dbReference>
<dbReference type="PDB" id="2PEL">
    <property type="method" value="X-ray"/>
    <property type="resolution" value="2.25 A"/>
    <property type="chains" value="A/B/C/D=24-259"/>
</dbReference>
<dbReference type="PDB" id="2TEP">
    <property type="method" value="X-ray"/>
    <property type="resolution" value="2.50 A"/>
    <property type="chains" value="A/B/C/D=24-259"/>
</dbReference>
<dbReference type="PDB" id="6V95">
    <property type="method" value="X-ray"/>
    <property type="resolution" value="1.78 A"/>
    <property type="chains" value="A/B/C/D=24-259"/>
</dbReference>
<dbReference type="PDB" id="6VAV">
    <property type="method" value="X-ray"/>
    <property type="resolution" value="1.85 A"/>
    <property type="chains" value="A/B/C/D=24-259"/>
</dbReference>
<dbReference type="PDB" id="6VAW">
    <property type="method" value="X-ray"/>
    <property type="resolution" value="1.75 A"/>
    <property type="chains" value="A/B/C/D=24-259"/>
</dbReference>
<dbReference type="PDB" id="6VC3">
    <property type="method" value="X-ray"/>
    <property type="resolution" value="1.95 A"/>
    <property type="chains" value="A/B/C/D=24-259"/>
</dbReference>
<dbReference type="PDB" id="6VC4">
    <property type="method" value="X-ray"/>
    <property type="resolution" value="1.90 A"/>
    <property type="chains" value="A/B/C/D=24-259"/>
</dbReference>
<dbReference type="PDB" id="6VGF">
    <property type="method" value="X-ray"/>
    <property type="resolution" value="1.83 A"/>
    <property type="chains" value="A/B/C/D=24-259"/>
</dbReference>
<dbReference type="PDBsum" id="1BZW"/>
<dbReference type="PDBsum" id="1CIW"/>
<dbReference type="PDBsum" id="1CQ9"/>
<dbReference type="PDBsum" id="1CR7"/>
<dbReference type="PDBsum" id="1QF3"/>
<dbReference type="PDBsum" id="1RIR"/>
<dbReference type="PDBsum" id="1RIT"/>
<dbReference type="PDBsum" id="1V6I"/>
<dbReference type="PDBsum" id="1V6J"/>
<dbReference type="PDBsum" id="1V6K"/>
<dbReference type="PDBsum" id="1V6L"/>
<dbReference type="PDBsum" id="1V6M"/>
<dbReference type="PDBsum" id="1V6N"/>
<dbReference type="PDBsum" id="1V6O"/>
<dbReference type="PDBsum" id="2DH1"/>
<dbReference type="PDBsum" id="2DV9"/>
<dbReference type="PDBsum" id="2DVA"/>
<dbReference type="PDBsum" id="2DVB"/>
<dbReference type="PDBsum" id="2DVD"/>
<dbReference type="PDBsum" id="2DVF"/>
<dbReference type="PDBsum" id="2DVG"/>
<dbReference type="PDBsum" id="2PEL"/>
<dbReference type="PDBsum" id="2TEP"/>
<dbReference type="PDBsum" id="6V95"/>
<dbReference type="PDBsum" id="6VAV"/>
<dbReference type="PDBsum" id="6VAW"/>
<dbReference type="PDBsum" id="6VC3"/>
<dbReference type="PDBsum" id="6VC4"/>
<dbReference type="PDBsum" id="6VGF"/>
<dbReference type="SMR" id="P02872"/>
<dbReference type="IntAct" id="P02872">
    <property type="interactions" value="1"/>
</dbReference>
<dbReference type="Allergome" id="1050">
    <property type="allergen name" value="Ara h Agglutinin"/>
</dbReference>
<dbReference type="UniLectin" id="P02872"/>
<dbReference type="GeneID" id="112777417"/>
<dbReference type="OrthoDB" id="2014828at2759"/>
<dbReference type="EvolutionaryTrace" id="P02872"/>
<dbReference type="GO" id="GO:0030246">
    <property type="term" value="F:carbohydrate binding"/>
    <property type="evidence" value="ECO:0007669"/>
    <property type="project" value="UniProtKB-KW"/>
</dbReference>
<dbReference type="GO" id="GO:0046872">
    <property type="term" value="F:metal ion binding"/>
    <property type="evidence" value="ECO:0007669"/>
    <property type="project" value="UniProtKB-KW"/>
</dbReference>
<dbReference type="CDD" id="cd06899">
    <property type="entry name" value="lectin_legume_LecRK_Arcelin_ConA"/>
    <property type="match status" value="1"/>
</dbReference>
<dbReference type="Gene3D" id="2.60.120.200">
    <property type="match status" value="1"/>
</dbReference>
<dbReference type="InterPro" id="IPR013320">
    <property type="entry name" value="ConA-like_dom_sf"/>
</dbReference>
<dbReference type="InterPro" id="IPR016363">
    <property type="entry name" value="L-lectin"/>
</dbReference>
<dbReference type="InterPro" id="IPR000985">
    <property type="entry name" value="Lectin_LegA_CS"/>
</dbReference>
<dbReference type="InterPro" id="IPR019825">
    <property type="entry name" value="Lectin_legB_Mn/Ca_BS"/>
</dbReference>
<dbReference type="InterPro" id="IPR001220">
    <property type="entry name" value="Legume_lectin_dom"/>
</dbReference>
<dbReference type="InterPro" id="IPR050258">
    <property type="entry name" value="Leguminous_Lectin"/>
</dbReference>
<dbReference type="PANTHER" id="PTHR32401">
    <property type="entry name" value="CONCANAVALIN A-LIKE LECTIN FAMILY PROTEIN"/>
    <property type="match status" value="1"/>
</dbReference>
<dbReference type="PANTHER" id="PTHR32401:SF49">
    <property type="entry name" value="OS10G0129200 PROTEIN"/>
    <property type="match status" value="1"/>
</dbReference>
<dbReference type="Pfam" id="PF00139">
    <property type="entry name" value="Lectin_legB"/>
    <property type="match status" value="1"/>
</dbReference>
<dbReference type="PIRSF" id="PIRSF002690">
    <property type="entry name" value="L-type_lectin_plant"/>
    <property type="match status" value="1"/>
</dbReference>
<dbReference type="SUPFAM" id="SSF49899">
    <property type="entry name" value="Concanavalin A-like lectins/glucanases"/>
    <property type="match status" value="1"/>
</dbReference>
<dbReference type="PROSITE" id="PS00308">
    <property type="entry name" value="LECTIN_LEGUME_ALPHA"/>
    <property type="match status" value="1"/>
</dbReference>
<dbReference type="PROSITE" id="PS00307">
    <property type="entry name" value="LECTIN_LEGUME_BETA"/>
    <property type="match status" value="1"/>
</dbReference>
<name>LECG_ARAHY</name>
<sequence length="273" mass="29325">MKPFCVFLTFFLLLAASSKKVDSAETVSFNFNSFSEGNPAINFQGDVTVLSNGNIQLTNLNKVNSVGRVLYAMPVRIWSSATGNVASFLTSFSFEMKDIKDYDPADGIIFFIAPEDTQIPAGSIGGGTLGVSDTKGAGHFVGVEFDTYSNSEYNDPPTDHVGIDVNSVDSVKTVPWNSVSGAVVKVTVIYDSSTKTLSVAVTNDNGDITTIAQVVDLKAKLPERVKFGFSASGSLGGRQIHLIRSWSFTSTLITTTRRSIDNNEKKIMNMASA</sequence>
<keyword id="KW-0002">3D-structure</keyword>
<keyword id="KW-0106">Calcium</keyword>
<keyword id="KW-0903">Direct protein sequencing</keyword>
<keyword id="KW-0430">Lectin</keyword>
<keyword id="KW-0464">Manganese</keyword>
<keyword id="KW-0479">Metal-binding</keyword>
<keyword id="KW-0732">Signal</keyword>
<comment type="function">
    <text>D-galactose specific lectin.</text>
</comment>
<comment type="subunit">
    <text>Homotetramer.</text>
</comment>
<comment type="miscellaneous">
    <text>Binds one manganese (or another transition metal) ion and one calcium ion. The metal ions are essential for the saccharide-binding and cell-agglutinating activities.</text>
</comment>
<comment type="similarity">
    <text evidence="2">Belongs to the leguminous lectin family.</text>
</comment>
<feature type="signal peptide" evidence="1">
    <location>
        <begin position="1"/>
        <end position="23"/>
    </location>
</feature>
<feature type="chain" id="PRO_0000017583" description="Galactose-binding lectin">
    <location>
        <begin position="24"/>
        <end position="273"/>
    </location>
</feature>
<feature type="binding site">
    <location>
        <position position="144"/>
    </location>
    <ligand>
        <name>Mn(2+)</name>
        <dbReference type="ChEBI" id="CHEBI:29035"/>
    </ligand>
</feature>
<feature type="binding site">
    <location>
        <position position="146"/>
    </location>
    <ligand>
        <name>Ca(2+)</name>
        <dbReference type="ChEBI" id="CHEBI:29108"/>
    </ligand>
</feature>
<feature type="binding site">
    <location>
        <position position="146"/>
    </location>
    <ligand>
        <name>Mn(2+)</name>
        <dbReference type="ChEBI" id="CHEBI:29035"/>
    </ligand>
</feature>
<feature type="binding site">
    <location>
        <position position="148"/>
    </location>
    <ligand>
        <name>Ca(2+)</name>
        <dbReference type="ChEBI" id="CHEBI:29108"/>
    </ligand>
</feature>
<feature type="binding site">
    <location>
        <position position="150"/>
    </location>
    <ligand>
        <name>Ca(2+)</name>
        <dbReference type="ChEBI" id="CHEBI:29108"/>
    </ligand>
</feature>
<feature type="binding site">
    <location>
        <position position="155"/>
    </location>
    <ligand>
        <name>Ca(2+)</name>
        <dbReference type="ChEBI" id="CHEBI:29108"/>
    </ligand>
</feature>
<feature type="binding site">
    <location>
        <position position="155"/>
    </location>
    <ligand>
        <name>Mn(2+)</name>
        <dbReference type="ChEBI" id="CHEBI:29035"/>
    </ligand>
</feature>
<feature type="binding site">
    <location>
        <position position="160"/>
    </location>
    <ligand>
        <name>Mn(2+)</name>
        <dbReference type="ChEBI" id="CHEBI:29035"/>
    </ligand>
</feature>
<feature type="sequence variant" description="In minor form.">
    <original>E</original>
    <variation>V</variation>
    <location>
        <position position="115"/>
    </location>
</feature>
<feature type="sequence variant" description="In minor form.">
    <original>K</original>
    <variation>A</variation>
    <location>
        <position position="172"/>
    </location>
</feature>
<feature type="sequence variant" description="In minor form.">
    <original>K</original>
    <variation>I</variation>
    <location>
        <position position="185"/>
    </location>
</feature>
<feature type="sequence variant" description="In minor form.">
    <original>LG</original>
    <variation>RA</variation>
    <location>
        <begin position="235"/>
        <end position="236"/>
    </location>
</feature>
<feature type="strand" evidence="4">
    <location>
        <begin position="25"/>
        <end position="33"/>
    </location>
</feature>
<feature type="strand" evidence="4">
    <location>
        <begin position="41"/>
        <end position="45"/>
    </location>
</feature>
<feature type="strand" evidence="3">
    <location>
        <begin position="51"/>
        <end position="53"/>
    </location>
</feature>
<feature type="strand" evidence="3">
    <location>
        <begin position="60"/>
        <end position="64"/>
    </location>
</feature>
<feature type="strand" evidence="4">
    <location>
        <begin position="66"/>
        <end position="73"/>
    </location>
</feature>
<feature type="turn" evidence="4">
    <location>
        <begin position="80"/>
        <end position="82"/>
    </location>
</feature>
<feature type="strand" evidence="4">
    <location>
        <begin position="87"/>
        <end position="97"/>
    </location>
</feature>
<feature type="strand" evidence="4">
    <location>
        <begin position="100"/>
        <end position="103"/>
    </location>
</feature>
<feature type="strand" evidence="4">
    <location>
        <begin position="107"/>
        <end position="114"/>
    </location>
</feature>
<feature type="helix" evidence="4">
    <location>
        <begin position="126"/>
        <end position="128"/>
    </location>
</feature>
<feature type="turn" evidence="4">
    <location>
        <begin position="129"/>
        <end position="131"/>
    </location>
</feature>
<feature type="strand" evidence="4">
    <location>
        <begin position="136"/>
        <end position="146"/>
    </location>
</feature>
<feature type="helix" evidence="4">
    <location>
        <begin position="151"/>
        <end position="153"/>
    </location>
</feature>
<feature type="strand" evidence="4">
    <location>
        <begin position="160"/>
        <end position="169"/>
    </location>
</feature>
<feature type="strand" evidence="4">
    <location>
        <begin position="171"/>
        <end position="175"/>
    </location>
</feature>
<feature type="strand" evidence="4">
    <location>
        <begin position="182"/>
        <end position="191"/>
    </location>
</feature>
<feature type="turn" evidence="4">
    <location>
        <begin position="192"/>
        <end position="195"/>
    </location>
</feature>
<feature type="strand" evidence="4">
    <location>
        <begin position="196"/>
        <end position="202"/>
    </location>
</feature>
<feature type="strand" evidence="3">
    <location>
        <begin position="204"/>
        <end position="206"/>
    </location>
</feature>
<feature type="strand" evidence="4">
    <location>
        <begin position="208"/>
        <end position="214"/>
    </location>
</feature>
<feature type="helix" evidence="4">
    <location>
        <begin position="217"/>
        <end position="220"/>
    </location>
</feature>
<feature type="strand" evidence="4">
    <location>
        <begin position="223"/>
        <end position="232"/>
    </location>
</feature>
<feature type="strand" evidence="4">
    <location>
        <begin position="235"/>
        <end position="237"/>
    </location>
</feature>
<feature type="strand" evidence="4">
    <location>
        <begin position="240"/>
        <end position="252"/>
    </location>
</feature>
<accession>P02872</accession>